<reference key="1">
    <citation type="journal article" date="2009" name="Genome Res.">
        <title>Comparative genomics of protoploid Saccharomycetaceae.</title>
        <authorList>
            <consortium name="The Genolevures Consortium"/>
            <person name="Souciet J.-L."/>
            <person name="Dujon B."/>
            <person name="Gaillardin C."/>
            <person name="Johnston M."/>
            <person name="Baret P.V."/>
            <person name="Cliften P."/>
            <person name="Sherman D.J."/>
            <person name="Weissenbach J."/>
            <person name="Westhof E."/>
            <person name="Wincker P."/>
            <person name="Jubin C."/>
            <person name="Poulain J."/>
            <person name="Barbe V."/>
            <person name="Segurens B."/>
            <person name="Artiguenave F."/>
            <person name="Anthouard V."/>
            <person name="Vacherie B."/>
            <person name="Val M.-E."/>
            <person name="Fulton R.S."/>
            <person name="Minx P."/>
            <person name="Wilson R."/>
            <person name="Durrens P."/>
            <person name="Jean G."/>
            <person name="Marck C."/>
            <person name="Martin T."/>
            <person name="Nikolski M."/>
            <person name="Rolland T."/>
            <person name="Seret M.-L."/>
            <person name="Casaregola S."/>
            <person name="Despons L."/>
            <person name="Fairhead C."/>
            <person name="Fischer G."/>
            <person name="Lafontaine I."/>
            <person name="Leh V."/>
            <person name="Lemaire M."/>
            <person name="de Montigny J."/>
            <person name="Neuveglise C."/>
            <person name="Thierry A."/>
            <person name="Blanc-Lenfle I."/>
            <person name="Bleykasten C."/>
            <person name="Diffels J."/>
            <person name="Fritsch E."/>
            <person name="Frangeul L."/>
            <person name="Goeffon A."/>
            <person name="Jauniaux N."/>
            <person name="Kachouri-Lafond R."/>
            <person name="Payen C."/>
            <person name="Potier S."/>
            <person name="Pribylova L."/>
            <person name="Ozanne C."/>
            <person name="Richard G.-F."/>
            <person name="Sacerdot C."/>
            <person name="Straub M.-L."/>
            <person name="Talla E."/>
        </authorList>
    </citation>
    <scope>NUCLEOTIDE SEQUENCE [LARGE SCALE GENOMIC DNA]</scope>
    <source>
        <strain>ATCC 56472 / CBS 6340 / NRRL Y-8284</strain>
    </source>
</reference>
<name>RRT5_LACTC</name>
<gene>
    <name type="primary">RRT5</name>
    <name type="ordered locus">KLTH0E04730g</name>
</gene>
<comment type="function">
    <text evidence="1">May be involved in the modulation of rDNA transcription.</text>
</comment>
<comment type="similarity">
    <text evidence="4">Belongs to the RRT5 family.</text>
</comment>
<accession>C5DHJ1</accession>
<evidence type="ECO:0000250" key="1"/>
<evidence type="ECO:0000255" key="2">
    <source>
        <dbReference type="PROSITE-ProRule" id="PRU00176"/>
    </source>
</evidence>
<evidence type="ECO:0000256" key="3">
    <source>
        <dbReference type="SAM" id="MobiDB-lite"/>
    </source>
</evidence>
<evidence type="ECO:0000305" key="4"/>
<protein>
    <recommendedName>
        <fullName>Regulator of rDNA transcription protein 5</fullName>
    </recommendedName>
</protein>
<feature type="chain" id="PRO_0000404359" description="Regulator of rDNA transcription protein 5">
    <location>
        <begin position="1"/>
        <end position="291"/>
    </location>
</feature>
<feature type="domain" description="RRM 1" evidence="2">
    <location>
        <begin position="21"/>
        <end position="104"/>
    </location>
</feature>
<feature type="domain" description="RRM 2" evidence="2">
    <location>
        <begin position="152"/>
        <end position="235"/>
    </location>
</feature>
<feature type="region of interest" description="Disordered" evidence="3">
    <location>
        <begin position="109"/>
        <end position="151"/>
    </location>
</feature>
<feature type="region of interest" description="Disordered" evidence="3">
    <location>
        <begin position="271"/>
        <end position="291"/>
    </location>
</feature>
<dbReference type="EMBL" id="CU928169">
    <property type="protein sequence ID" value="CAR23252.1"/>
    <property type="molecule type" value="Genomic_DNA"/>
</dbReference>
<dbReference type="RefSeq" id="XP_002553689.1">
    <property type="nucleotide sequence ID" value="XM_002553643.1"/>
</dbReference>
<dbReference type="SMR" id="C5DHJ1"/>
<dbReference type="FunCoup" id="C5DHJ1">
    <property type="interactions" value="213"/>
</dbReference>
<dbReference type="STRING" id="559295.C5DHJ1"/>
<dbReference type="GeneID" id="8291838"/>
<dbReference type="KEGG" id="lth:KLTH0E04730g"/>
<dbReference type="eggNOG" id="ENOG502RZDM">
    <property type="taxonomic scope" value="Eukaryota"/>
</dbReference>
<dbReference type="HOGENOM" id="CLU_042558_0_0_1"/>
<dbReference type="InParanoid" id="C5DHJ1"/>
<dbReference type="OMA" id="IWIFRTR"/>
<dbReference type="OrthoDB" id="439808at2759"/>
<dbReference type="Proteomes" id="UP000002036">
    <property type="component" value="Chromosome E"/>
</dbReference>
<dbReference type="GO" id="GO:0003729">
    <property type="term" value="F:mRNA binding"/>
    <property type="evidence" value="ECO:0007669"/>
    <property type="project" value="TreeGrafter"/>
</dbReference>
<dbReference type="CDD" id="cd12409">
    <property type="entry name" value="RRM1_RRT5"/>
    <property type="match status" value="1"/>
</dbReference>
<dbReference type="CDD" id="cd12410">
    <property type="entry name" value="RRM2_RRT5"/>
    <property type="match status" value="1"/>
</dbReference>
<dbReference type="Gene3D" id="3.30.70.330">
    <property type="match status" value="2"/>
</dbReference>
<dbReference type="InterPro" id="IPR050502">
    <property type="entry name" value="Euk_RNA-bind_prot"/>
</dbReference>
<dbReference type="InterPro" id="IPR012677">
    <property type="entry name" value="Nucleotide-bd_a/b_plait_sf"/>
</dbReference>
<dbReference type="InterPro" id="IPR035979">
    <property type="entry name" value="RBD_domain_sf"/>
</dbReference>
<dbReference type="InterPro" id="IPR000504">
    <property type="entry name" value="RRM_dom"/>
</dbReference>
<dbReference type="InterPro" id="IPR034244">
    <property type="entry name" value="Rrt5_RRM1"/>
</dbReference>
<dbReference type="InterPro" id="IPR034247">
    <property type="entry name" value="Rrt5_RRM2"/>
</dbReference>
<dbReference type="PANTHER" id="PTHR48025">
    <property type="entry name" value="OS02G0815200 PROTEIN"/>
    <property type="match status" value="1"/>
</dbReference>
<dbReference type="PANTHER" id="PTHR48025:SF1">
    <property type="entry name" value="RRM DOMAIN-CONTAINING PROTEIN"/>
    <property type="match status" value="1"/>
</dbReference>
<dbReference type="Pfam" id="PF00076">
    <property type="entry name" value="RRM_1"/>
    <property type="match status" value="1"/>
</dbReference>
<dbReference type="SMART" id="SM00360">
    <property type="entry name" value="RRM"/>
    <property type="match status" value="2"/>
</dbReference>
<dbReference type="SUPFAM" id="SSF54928">
    <property type="entry name" value="RNA-binding domain, RBD"/>
    <property type="match status" value="1"/>
</dbReference>
<dbReference type="PROSITE" id="PS50102">
    <property type="entry name" value="RRM"/>
    <property type="match status" value="1"/>
</dbReference>
<organism>
    <name type="scientific">Lachancea thermotolerans (strain ATCC 56472 / CBS 6340 / NRRL Y-8284)</name>
    <name type="common">Yeast</name>
    <name type="synonym">Kluyveromyces thermotolerans</name>
    <dbReference type="NCBI Taxonomy" id="559295"/>
    <lineage>
        <taxon>Eukaryota</taxon>
        <taxon>Fungi</taxon>
        <taxon>Dikarya</taxon>
        <taxon>Ascomycota</taxon>
        <taxon>Saccharomycotina</taxon>
        <taxon>Saccharomycetes</taxon>
        <taxon>Saccharomycetales</taxon>
        <taxon>Saccharomycetaceae</taxon>
        <taxon>Lachancea</taxon>
    </lineage>
</organism>
<sequence>MSPTQPNPAAALSGSAEPQTKRIYISNLDFSTTEEELEQFLQEFRVVSVLIPSQTVRGFRNSTVRPLGIGYADFASAADALQAVENLNGKQLRERTLKIKMYVPYSPRARAERRKEKRKVPAPQAEENPDAAPQDAQQPQPPAPAEEPTSKDTVYCAYLPSKVTDVELREFFADYQPQDIYVYRTNGSRRKVYFHRRFTAALVTLGGEAELANAIETLGTRRLMGKKITLRPARLSKVEEVQHAAARKLELEQIQQQTRQIAEHAMAMEEHRQQEAEIPAAETPDDVAATA</sequence>
<keyword id="KW-1185">Reference proteome</keyword>
<keyword id="KW-0677">Repeat</keyword>
<keyword id="KW-0694">RNA-binding</keyword>
<keyword id="KW-0804">Transcription</keyword>
<keyword id="KW-0805">Transcription regulation</keyword>
<proteinExistence type="inferred from homology"/>